<name>AC4CH_SALNS</name>
<gene>
    <name type="primary">yqfB</name>
    <name type="ordered locus">SNSL254_A3285</name>
</gene>
<protein>
    <recommendedName>
        <fullName evidence="2">N(4)-acetylcytidine amidohydrolase</fullName>
        <shortName evidence="2">ac4C amidohydrolase</shortName>
        <ecNumber evidence="2">3.5.1.135</ecNumber>
    </recommendedName>
</protein>
<reference key="1">
    <citation type="journal article" date="2011" name="J. Bacteriol.">
        <title>Comparative genomics of 28 Salmonella enterica isolates: evidence for CRISPR-mediated adaptive sublineage evolution.</title>
        <authorList>
            <person name="Fricke W.F."/>
            <person name="Mammel M.K."/>
            <person name="McDermott P.F."/>
            <person name="Tartera C."/>
            <person name="White D.G."/>
            <person name="Leclerc J.E."/>
            <person name="Ravel J."/>
            <person name="Cebula T.A."/>
        </authorList>
    </citation>
    <scope>NUCLEOTIDE SEQUENCE [LARGE SCALE GENOMIC DNA]</scope>
    <source>
        <strain>SL254</strain>
    </source>
</reference>
<comment type="function">
    <text evidence="2">Catalyzes the hydrolysis of N(4)-acetylcytidine (ac4C).</text>
</comment>
<comment type="catalytic activity">
    <reaction evidence="2">
        <text>N(4)-acetylcytidine + H2O = cytidine + acetate + H(+)</text>
        <dbReference type="Rhea" id="RHEA:62932"/>
        <dbReference type="ChEBI" id="CHEBI:15377"/>
        <dbReference type="ChEBI" id="CHEBI:15378"/>
        <dbReference type="ChEBI" id="CHEBI:17562"/>
        <dbReference type="ChEBI" id="CHEBI:30089"/>
        <dbReference type="ChEBI" id="CHEBI:70989"/>
        <dbReference type="EC" id="3.5.1.135"/>
    </reaction>
</comment>
<comment type="catalytic activity">
    <reaction evidence="2">
        <text>N(4)-acetyl-2'-deoxycytidine + H2O = 2'-deoxycytidine + acetate + H(+)</text>
        <dbReference type="Rhea" id="RHEA:62936"/>
        <dbReference type="ChEBI" id="CHEBI:15377"/>
        <dbReference type="ChEBI" id="CHEBI:15378"/>
        <dbReference type="ChEBI" id="CHEBI:15698"/>
        <dbReference type="ChEBI" id="CHEBI:30089"/>
        <dbReference type="ChEBI" id="CHEBI:146133"/>
        <dbReference type="EC" id="3.5.1.135"/>
    </reaction>
</comment>
<comment type="catalytic activity">
    <reaction evidence="2">
        <text>N(4)-acetylcytosine + H2O = cytosine + acetate + H(+)</text>
        <dbReference type="Rhea" id="RHEA:62940"/>
        <dbReference type="ChEBI" id="CHEBI:15377"/>
        <dbReference type="ChEBI" id="CHEBI:15378"/>
        <dbReference type="ChEBI" id="CHEBI:16040"/>
        <dbReference type="ChEBI" id="CHEBI:30089"/>
        <dbReference type="ChEBI" id="CHEBI:146134"/>
        <dbReference type="EC" id="3.5.1.135"/>
    </reaction>
</comment>
<comment type="similarity">
    <text evidence="2">Belongs to the N(4)-acetylcytidine amidohydrolase family.</text>
</comment>
<dbReference type="EC" id="3.5.1.135" evidence="2"/>
<dbReference type="EMBL" id="CP001113">
    <property type="protein sequence ID" value="ACF63897.1"/>
    <property type="molecule type" value="Genomic_DNA"/>
</dbReference>
<dbReference type="RefSeq" id="WP_001182980.1">
    <property type="nucleotide sequence ID" value="NZ_CCMR01000001.1"/>
</dbReference>
<dbReference type="SMR" id="B4T545"/>
<dbReference type="KEGG" id="see:SNSL254_A3285"/>
<dbReference type="HOGENOM" id="CLU_152586_0_0_6"/>
<dbReference type="Proteomes" id="UP000008824">
    <property type="component" value="Chromosome"/>
</dbReference>
<dbReference type="GO" id="GO:0005829">
    <property type="term" value="C:cytosol"/>
    <property type="evidence" value="ECO:0007669"/>
    <property type="project" value="TreeGrafter"/>
</dbReference>
<dbReference type="GO" id="GO:0016813">
    <property type="term" value="F:hydrolase activity, acting on carbon-nitrogen (but not peptide) bonds, in linear amidines"/>
    <property type="evidence" value="ECO:0007669"/>
    <property type="project" value="UniProtKB-UniRule"/>
</dbReference>
<dbReference type="GO" id="GO:0106251">
    <property type="term" value="F:N4-acetylcytidine amidohydrolase activity"/>
    <property type="evidence" value="ECO:0007669"/>
    <property type="project" value="RHEA"/>
</dbReference>
<dbReference type="CDD" id="cd06552">
    <property type="entry name" value="ASCH_yqfb_like"/>
    <property type="match status" value="1"/>
</dbReference>
<dbReference type="FunFam" id="2.30.130.30:FF:000001">
    <property type="entry name" value="UPF0267 protein YqfB"/>
    <property type="match status" value="1"/>
</dbReference>
<dbReference type="Gene3D" id="2.30.130.30">
    <property type="entry name" value="Hypothetical protein"/>
    <property type="match status" value="1"/>
</dbReference>
<dbReference type="HAMAP" id="MF_00684">
    <property type="entry name" value="ac4C_amidohydr"/>
    <property type="match status" value="1"/>
</dbReference>
<dbReference type="InterPro" id="IPR008314">
    <property type="entry name" value="AC4CH"/>
</dbReference>
<dbReference type="InterPro" id="IPR007374">
    <property type="entry name" value="ASCH_domain"/>
</dbReference>
<dbReference type="InterPro" id="IPR015947">
    <property type="entry name" value="PUA-like_sf"/>
</dbReference>
<dbReference type="NCBIfam" id="NF003443">
    <property type="entry name" value="PRK04980.1"/>
    <property type="match status" value="1"/>
</dbReference>
<dbReference type="PANTHER" id="PTHR38088">
    <property type="entry name" value="UCP029143 FAMILY PROTEIN"/>
    <property type="match status" value="1"/>
</dbReference>
<dbReference type="PANTHER" id="PTHR38088:SF2">
    <property type="entry name" value="UCP029143 FAMILY PROTEIN"/>
    <property type="match status" value="1"/>
</dbReference>
<dbReference type="Pfam" id="PF04266">
    <property type="entry name" value="ASCH"/>
    <property type="match status" value="1"/>
</dbReference>
<dbReference type="PIRSF" id="PIRSF029143">
    <property type="entry name" value="UCP029143"/>
    <property type="match status" value="1"/>
</dbReference>
<dbReference type="SMART" id="SM01022">
    <property type="entry name" value="ASCH"/>
    <property type="match status" value="1"/>
</dbReference>
<dbReference type="SUPFAM" id="SSF88697">
    <property type="entry name" value="PUA domain-like"/>
    <property type="match status" value="1"/>
</dbReference>
<sequence length="104" mass="12084">MQPNDITFFQRFQNDILAGRKTITIRDVSESHFKAGDVLRVGRFEDDGYFCTIEVTGTSTVTLDTLNEKHAQQENMSLDELKRVIAEIYPNQTQFYVIDFKCLR</sequence>
<keyword id="KW-0378">Hydrolase</keyword>
<proteinExistence type="inferred from homology"/>
<evidence type="ECO:0000255" key="1"/>
<evidence type="ECO:0000255" key="2">
    <source>
        <dbReference type="HAMAP-Rule" id="MF_00684"/>
    </source>
</evidence>
<accession>B4T545</accession>
<organism>
    <name type="scientific">Salmonella newport (strain SL254)</name>
    <dbReference type="NCBI Taxonomy" id="423368"/>
    <lineage>
        <taxon>Bacteria</taxon>
        <taxon>Pseudomonadati</taxon>
        <taxon>Pseudomonadota</taxon>
        <taxon>Gammaproteobacteria</taxon>
        <taxon>Enterobacterales</taxon>
        <taxon>Enterobacteriaceae</taxon>
        <taxon>Salmonella</taxon>
    </lineage>
</organism>
<feature type="chain" id="PRO_1000131797" description="N(4)-acetylcytidine amidohydrolase">
    <location>
        <begin position="1"/>
        <end position="104"/>
    </location>
</feature>
<feature type="domain" description="ASCH" evidence="1">
    <location>
        <begin position="6"/>
        <end position="94"/>
    </location>
</feature>
<feature type="active site" description="Proton acceptor" evidence="2">
    <location>
        <position position="21"/>
    </location>
</feature>
<feature type="active site" description="Nucleophile" evidence="2">
    <location>
        <position position="24"/>
    </location>
</feature>
<feature type="active site" description="Proton donor" evidence="2">
    <location>
        <position position="74"/>
    </location>
</feature>